<evidence type="ECO:0000255" key="1">
    <source>
        <dbReference type="HAMAP-Rule" id="MF_00688"/>
    </source>
</evidence>
<comment type="function">
    <text evidence="1">Functions in the N-end rule pathway of protein degradation where it conjugates Leu, Phe and, less efficiently, Met from aminoacyl-tRNAs to the N-termini of proteins containing an N-terminal arginine or lysine.</text>
</comment>
<comment type="catalytic activity">
    <reaction evidence="1">
        <text>N-terminal L-lysyl-[protein] + L-leucyl-tRNA(Leu) = N-terminal L-leucyl-L-lysyl-[protein] + tRNA(Leu) + H(+)</text>
        <dbReference type="Rhea" id="RHEA:12340"/>
        <dbReference type="Rhea" id="RHEA-COMP:9613"/>
        <dbReference type="Rhea" id="RHEA-COMP:9622"/>
        <dbReference type="Rhea" id="RHEA-COMP:12670"/>
        <dbReference type="Rhea" id="RHEA-COMP:12671"/>
        <dbReference type="ChEBI" id="CHEBI:15378"/>
        <dbReference type="ChEBI" id="CHEBI:65249"/>
        <dbReference type="ChEBI" id="CHEBI:78442"/>
        <dbReference type="ChEBI" id="CHEBI:78494"/>
        <dbReference type="ChEBI" id="CHEBI:133043"/>
        <dbReference type="EC" id="2.3.2.6"/>
    </reaction>
</comment>
<comment type="catalytic activity">
    <reaction evidence="1">
        <text>N-terminal L-arginyl-[protein] + L-leucyl-tRNA(Leu) = N-terminal L-leucyl-L-arginyl-[protein] + tRNA(Leu) + H(+)</text>
        <dbReference type="Rhea" id="RHEA:50416"/>
        <dbReference type="Rhea" id="RHEA-COMP:9613"/>
        <dbReference type="Rhea" id="RHEA-COMP:9622"/>
        <dbReference type="Rhea" id="RHEA-COMP:12672"/>
        <dbReference type="Rhea" id="RHEA-COMP:12673"/>
        <dbReference type="ChEBI" id="CHEBI:15378"/>
        <dbReference type="ChEBI" id="CHEBI:64719"/>
        <dbReference type="ChEBI" id="CHEBI:78442"/>
        <dbReference type="ChEBI" id="CHEBI:78494"/>
        <dbReference type="ChEBI" id="CHEBI:133044"/>
        <dbReference type="EC" id="2.3.2.6"/>
    </reaction>
</comment>
<comment type="catalytic activity">
    <reaction evidence="1">
        <text>L-phenylalanyl-tRNA(Phe) + an N-terminal L-alpha-aminoacyl-[protein] = an N-terminal L-phenylalanyl-L-alpha-aminoacyl-[protein] + tRNA(Phe)</text>
        <dbReference type="Rhea" id="RHEA:43632"/>
        <dbReference type="Rhea" id="RHEA-COMP:9668"/>
        <dbReference type="Rhea" id="RHEA-COMP:9699"/>
        <dbReference type="Rhea" id="RHEA-COMP:10636"/>
        <dbReference type="Rhea" id="RHEA-COMP:10637"/>
        <dbReference type="ChEBI" id="CHEBI:78442"/>
        <dbReference type="ChEBI" id="CHEBI:78531"/>
        <dbReference type="ChEBI" id="CHEBI:78597"/>
        <dbReference type="ChEBI" id="CHEBI:83561"/>
        <dbReference type="EC" id="2.3.2.6"/>
    </reaction>
</comment>
<comment type="subcellular location">
    <subcellularLocation>
        <location evidence="1">Cytoplasm</location>
    </subcellularLocation>
</comment>
<comment type="similarity">
    <text evidence="1">Belongs to the L/F-transferase family.</text>
</comment>
<dbReference type="EC" id="2.3.2.6" evidence="1"/>
<dbReference type="EMBL" id="CP000038">
    <property type="protein sequence ID" value="AAZ87627.1"/>
    <property type="molecule type" value="Genomic_DNA"/>
</dbReference>
<dbReference type="RefSeq" id="WP_001241654.1">
    <property type="nucleotide sequence ID" value="NC_007384.1"/>
</dbReference>
<dbReference type="SMR" id="Q3Z3N5"/>
<dbReference type="GeneID" id="93776535"/>
<dbReference type="KEGG" id="ssn:SSON_0886"/>
<dbReference type="HOGENOM" id="CLU_075045_0_0_6"/>
<dbReference type="Proteomes" id="UP000002529">
    <property type="component" value="Chromosome"/>
</dbReference>
<dbReference type="GO" id="GO:0005737">
    <property type="term" value="C:cytoplasm"/>
    <property type="evidence" value="ECO:0007669"/>
    <property type="project" value="UniProtKB-SubCell"/>
</dbReference>
<dbReference type="GO" id="GO:0008914">
    <property type="term" value="F:leucyl-tRNA--protein transferase activity"/>
    <property type="evidence" value="ECO:0007669"/>
    <property type="project" value="UniProtKB-UniRule"/>
</dbReference>
<dbReference type="GO" id="GO:0030163">
    <property type="term" value="P:protein catabolic process"/>
    <property type="evidence" value="ECO:0007669"/>
    <property type="project" value="UniProtKB-UniRule"/>
</dbReference>
<dbReference type="FunFam" id="3.30.70.3550:FF:000001">
    <property type="entry name" value="Leucyl/phenylalanyl-tRNA--protein transferase"/>
    <property type="match status" value="1"/>
</dbReference>
<dbReference type="FunFam" id="3.40.630.70:FF:000001">
    <property type="entry name" value="Leucyl/phenylalanyl-tRNA--protein transferase"/>
    <property type="match status" value="1"/>
</dbReference>
<dbReference type="Gene3D" id="3.40.630.70">
    <property type="entry name" value="Leucyl/phenylalanyl-tRNA-protein transferase, C-terminal domain"/>
    <property type="match status" value="1"/>
</dbReference>
<dbReference type="Gene3D" id="3.30.70.3550">
    <property type="entry name" value="Leucyl/phenylalanyl-tRNA-protein transferase, N-terminal domain"/>
    <property type="match status" value="1"/>
</dbReference>
<dbReference type="HAMAP" id="MF_00688">
    <property type="entry name" value="Leu_Phe_trans"/>
    <property type="match status" value="1"/>
</dbReference>
<dbReference type="InterPro" id="IPR016181">
    <property type="entry name" value="Acyl_CoA_acyltransferase"/>
</dbReference>
<dbReference type="InterPro" id="IPR004616">
    <property type="entry name" value="Leu/Phe-tRNA_Trfase"/>
</dbReference>
<dbReference type="InterPro" id="IPR042203">
    <property type="entry name" value="Leu/Phe-tRNA_Trfase_C"/>
</dbReference>
<dbReference type="InterPro" id="IPR042221">
    <property type="entry name" value="Leu/Phe-tRNA_Trfase_N"/>
</dbReference>
<dbReference type="NCBIfam" id="TIGR00667">
    <property type="entry name" value="aat"/>
    <property type="match status" value="1"/>
</dbReference>
<dbReference type="PANTHER" id="PTHR30098">
    <property type="entry name" value="LEUCYL/PHENYLALANYL-TRNA--PROTEIN TRANSFERASE"/>
    <property type="match status" value="1"/>
</dbReference>
<dbReference type="PANTHER" id="PTHR30098:SF2">
    <property type="entry name" value="LEUCYL_PHENYLALANYL-TRNA--PROTEIN TRANSFERASE"/>
    <property type="match status" value="1"/>
</dbReference>
<dbReference type="Pfam" id="PF03588">
    <property type="entry name" value="Leu_Phe_trans"/>
    <property type="match status" value="1"/>
</dbReference>
<dbReference type="SUPFAM" id="SSF55729">
    <property type="entry name" value="Acyl-CoA N-acyltransferases (Nat)"/>
    <property type="match status" value="1"/>
</dbReference>
<organism>
    <name type="scientific">Shigella sonnei (strain Ss046)</name>
    <dbReference type="NCBI Taxonomy" id="300269"/>
    <lineage>
        <taxon>Bacteria</taxon>
        <taxon>Pseudomonadati</taxon>
        <taxon>Pseudomonadota</taxon>
        <taxon>Gammaproteobacteria</taxon>
        <taxon>Enterobacterales</taxon>
        <taxon>Enterobacteriaceae</taxon>
        <taxon>Shigella</taxon>
    </lineage>
</organism>
<accession>Q3Z3N5</accession>
<protein>
    <recommendedName>
        <fullName evidence="1">Leucyl/phenylalanyl-tRNA--protein transferase</fullName>
        <ecNumber evidence="1">2.3.2.6</ecNumber>
    </recommendedName>
    <alternativeName>
        <fullName evidence="1">L/F-transferase</fullName>
    </alternativeName>
    <alternativeName>
        <fullName evidence="1">Leucyltransferase</fullName>
    </alternativeName>
    <alternativeName>
        <fullName evidence="1">Phenyalanyltransferase</fullName>
    </alternativeName>
</protein>
<gene>
    <name evidence="1" type="primary">aat</name>
    <name type="ordered locus">SSON_0886</name>
</gene>
<feature type="chain" id="PRO_0000258100" description="Leucyl/phenylalanyl-tRNA--protein transferase">
    <location>
        <begin position="1"/>
        <end position="234"/>
    </location>
</feature>
<proteinExistence type="inferred from homology"/>
<keyword id="KW-0012">Acyltransferase</keyword>
<keyword id="KW-0963">Cytoplasm</keyword>
<keyword id="KW-1185">Reference proteome</keyword>
<keyword id="KW-0808">Transferase</keyword>
<sequence length="234" mass="26585">MRLVQLSRHSIAFPSPEGALREPNGLLALGGDLSPARLLMAYQRGIFPWFSPGAPILWWSPDPRAVLWPESLHISRSMKRFHKRSPYRVTMNYAFGQVIEGCASDREEGTWITRGVVEAYHRLHELGHAHSIEVWHEDELVGGMYGVAQGTLFCGESMFSRMENASKTALLVFCEEFISHGGKLIDCQVLNDHTASLGACEIPRRDYLNYLNQMRLGRLPNNFWVPRCLFSPQK</sequence>
<name>LFTR_SHISS</name>
<reference key="1">
    <citation type="journal article" date="2005" name="Nucleic Acids Res.">
        <title>Genome dynamics and diversity of Shigella species, the etiologic agents of bacillary dysentery.</title>
        <authorList>
            <person name="Yang F."/>
            <person name="Yang J."/>
            <person name="Zhang X."/>
            <person name="Chen L."/>
            <person name="Jiang Y."/>
            <person name="Yan Y."/>
            <person name="Tang X."/>
            <person name="Wang J."/>
            <person name="Xiong Z."/>
            <person name="Dong J."/>
            <person name="Xue Y."/>
            <person name="Zhu Y."/>
            <person name="Xu X."/>
            <person name="Sun L."/>
            <person name="Chen S."/>
            <person name="Nie H."/>
            <person name="Peng J."/>
            <person name="Xu J."/>
            <person name="Wang Y."/>
            <person name="Yuan Z."/>
            <person name="Wen Y."/>
            <person name="Yao Z."/>
            <person name="Shen Y."/>
            <person name="Qiang B."/>
            <person name="Hou Y."/>
            <person name="Yu J."/>
            <person name="Jin Q."/>
        </authorList>
    </citation>
    <scope>NUCLEOTIDE SEQUENCE [LARGE SCALE GENOMIC DNA]</scope>
    <source>
        <strain>Ss046</strain>
    </source>
</reference>